<sequence length="216" mass="22980">MTSKEELLQELSEAIISCKKDAVLAAVEKAKQVMEPAEIIENGLAAGMNQVGVLFERGKLFLPHVMMAADAMTAGVKVLEADMPAGTETKKLGVIVNGTVEGDVHDIGKSIVSTMLQSAGFEVHDIGRDVPIKNFVEKAKEVNANMIGISALMTTTLQGQREVIELLKEEGMREKVKVMVGGAPATQAWADKIGADCYAENASEAVAKAKELLVGK</sequence>
<keyword id="KW-0170">Cobalt</keyword>
<keyword id="KW-0479">Metal-binding</keyword>
<keyword id="KW-0484">Methanogenesis</keyword>
<keyword id="KW-0677">Repeat</keyword>
<gene>
    <name type="primary">mtbC1</name>
    <name type="ordered locus">MM_2052</name>
</gene>
<feature type="chain" id="PRO_0000216478" description="Dimethylamine corrinoid protein 1">
    <location>
        <begin position="1"/>
        <end position="216"/>
    </location>
</feature>
<feature type="domain" description="B12-binding N-terminal" evidence="3">
    <location>
        <begin position="1"/>
        <end position="91"/>
    </location>
</feature>
<feature type="domain" description="B12-binding" evidence="2">
    <location>
        <begin position="92"/>
        <end position="216"/>
    </location>
</feature>
<feature type="binding site" description="axial binding residue" evidence="1">
    <location>
        <position position="105"/>
    </location>
    <ligand>
        <name>methylcob(III)alamin</name>
        <dbReference type="ChEBI" id="CHEBI:28115"/>
    </ligand>
    <ligandPart>
        <name>Co</name>
        <dbReference type="ChEBI" id="CHEBI:27638"/>
    </ligandPart>
</feature>
<evidence type="ECO:0000250" key="1"/>
<evidence type="ECO:0000255" key="2">
    <source>
        <dbReference type="PROSITE-ProRule" id="PRU00666"/>
    </source>
</evidence>
<evidence type="ECO:0000255" key="3">
    <source>
        <dbReference type="PROSITE-ProRule" id="PRU00667"/>
    </source>
</evidence>
<evidence type="ECO:0000305" key="4"/>
<protein>
    <recommendedName>
        <fullName>Dimethylamine corrinoid protein 1</fullName>
    </recommendedName>
</protein>
<name>MTBC1_METMA</name>
<organism>
    <name type="scientific">Methanosarcina mazei (strain ATCC BAA-159 / DSM 3647 / Goe1 / Go1 / JCM 11833 / OCM 88)</name>
    <name type="common">Methanosarcina frisia</name>
    <dbReference type="NCBI Taxonomy" id="192952"/>
    <lineage>
        <taxon>Archaea</taxon>
        <taxon>Methanobacteriati</taxon>
        <taxon>Methanobacteriota</taxon>
        <taxon>Stenosarchaea group</taxon>
        <taxon>Methanomicrobia</taxon>
        <taxon>Methanosarcinales</taxon>
        <taxon>Methanosarcinaceae</taxon>
        <taxon>Methanosarcina</taxon>
    </lineage>
</organism>
<reference key="1">
    <citation type="journal article" date="2002" name="J. Mol. Microbiol. Biotechnol.">
        <title>The genome of Methanosarcina mazei: evidence for lateral gene transfer between Bacteria and Archaea.</title>
        <authorList>
            <person name="Deppenmeier U."/>
            <person name="Johann A."/>
            <person name="Hartsch T."/>
            <person name="Merkl R."/>
            <person name="Schmitz R.A."/>
            <person name="Martinez-Arias R."/>
            <person name="Henne A."/>
            <person name="Wiezer A."/>
            <person name="Baeumer S."/>
            <person name="Jacobi C."/>
            <person name="Brueggemann H."/>
            <person name="Lienard T."/>
            <person name="Christmann A."/>
            <person name="Boemecke M."/>
            <person name="Steckel S."/>
            <person name="Bhattacharyya A."/>
            <person name="Lykidis A."/>
            <person name="Overbeek R."/>
            <person name="Klenk H.-P."/>
            <person name="Gunsalus R.P."/>
            <person name="Fritz H.-J."/>
            <person name="Gottschalk G."/>
        </authorList>
    </citation>
    <scope>NUCLEOTIDE SEQUENCE [LARGE SCALE GENOMIC DNA]</scope>
    <source>
        <strain>ATCC BAA-159 / DSM 3647 / Goe1 / Go1 / JCM 11833 / OCM 88</strain>
    </source>
</reference>
<comment type="function">
    <text evidence="1">Acts as a methyl group carrier between MtbB and MtbA.</text>
</comment>
<comment type="pathway">
    <text>One-carbon metabolism; methanogenesis from dimethylamine.</text>
</comment>
<comment type="similarity">
    <text evidence="4">Belongs to the methylamine corrinoid protein family.</text>
</comment>
<comment type="sequence caution" evidence="4">
    <conflict type="erroneous initiation">
        <sequence resource="EMBL-CDS" id="AAM31748"/>
    </conflict>
</comment>
<dbReference type="EMBL" id="AE008384">
    <property type="protein sequence ID" value="AAM31748.1"/>
    <property type="status" value="ALT_INIT"/>
    <property type="molecule type" value="Genomic_DNA"/>
</dbReference>
<dbReference type="SMR" id="P58979"/>
<dbReference type="KEGG" id="mma:MM_2052"/>
<dbReference type="PATRIC" id="fig|192952.21.peg.2356"/>
<dbReference type="eggNOG" id="arCOG02030">
    <property type="taxonomic scope" value="Archaea"/>
</dbReference>
<dbReference type="HOGENOM" id="CLU_082102_1_0_2"/>
<dbReference type="UniPathway" id="UPA00644"/>
<dbReference type="Proteomes" id="UP000000595">
    <property type="component" value="Chromosome"/>
</dbReference>
<dbReference type="GO" id="GO:0005829">
    <property type="term" value="C:cytosol"/>
    <property type="evidence" value="ECO:0007669"/>
    <property type="project" value="TreeGrafter"/>
</dbReference>
<dbReference type="GO" id="GO:0031419">
    <property type="term" value="F:cobalamin binding"/>
    <property type="evidence" value="ECO:0007669"/>
    <property type="project" value="InterPro"/>
</dbReference>
<dbReference type="GO" id="GO:0050897">
    <property type="term" value="F:cobalt ion binding"/>
    <property type="evidence" value="ECO:0007669"/>
    <property type="project" value="InterPro"/>
</dbReference>
<dbReference type="GO" id="GO:0008705">
    <property type="term" value="F:methionine synthase activity"/>
    <property type="evidence" value="ECO:0007669"/>
    <property type="project" value="TreeGrafter"/>
</dbReference>
<dbReference type="GO" id="GO:0050667">
    <property type="term" value="P:homocysteine metabolic process"/>
    <property type="evidence" value="ECO:0007669"/>
    <property type="project" value="TreeGrafter"/>
</dbReference>
<dbReference type="GO" id="GO:0015948">
    <property type="term" value="P:methanogenesis"/>
    <property type="evidence" value="ECO:0007669"/>
    <property type="project" value="UniProtKB-KW"/>
</dbReference>
<dbReference type="GO" id="GO:0046653">
    <property type="term" value="P:tetrahydrofolate metabolic process"/>
    <property type="evidence" value="ECO:0007669"/>
    <property type="project" value="TreeGrafter"/>
</dbReference>
<dbReference type="CDD" id="cd02070">
    <property type="entry name" value="corrinoid_protein_B12-BD"/>
    <property type="match status" value="1"/>
</dbReference>
<dbReference type="FunFam" id="3.40.50.280:FF:000003">
    <property type="entry name" value="Dimethylamine methyltransferase corrinoid protein"/>
    <property type="match status" value="1"/>
</dbReference>
<dbReference type="FunFam" id="1.10.1240.10:FF:000004">
    <property type="entry name" value="Monomethylamine methyltransferase corrinoid protein"/>
    <property type="match status" value="1"/>
</dbReference>
<dbReference type="Gene3D" id="3.40.50.280">
    <property type="entry name" value="Cobalamin-binding domain"/>
    <property type="match status" value="1"/>
</dbReference>
<dbReference type="Gene3D" id="1.10.1240.10">
    <property type="entry name" value="Methionine synthase domain"/>
    <property type="match status" value="1"/>
</dbReference>
<dbReference type="InterPro" id="IPR003759">
    <property type="entry name" value="Cbl-bd_cap"/>
</dbReference>
<dbReference type="InterPro" id="IPR006158">
    <property type="entry name" value="Cobalamin-bd"/>
</dbReference>
<dbReference type="InterPro" id="IPR036724">
    <property type="entry name" value="Cobalamin-bd_sf"/>
</dbReference>
<dbReference type="InterPro" id="IPR012741">
    <property type="entry name" value="Corrinoid_p"/>
</dbReference>
<dbReference type="InterPro" id="IPR048095">
    <property type="entry name" value="Dimeth_corrin_MtbC"/>
</dbReference>
<dbReference type="InterPro" id="IPR050554">
    <property type="entry name" value="Met_Synthase/Corrinoid"/>
</dbReference>
<dbReference type="InterPro" id="IPR036594">
    <property type="entry name" value="Meth_synthase_dom"/>
</dbReference>
<dbReference type="NCBIfam" id="NF041607">
    <property type="entry name" value="dimeth_corrin_MtbC"/>
    <property type="match status" value="1"/>
</dbReference>
<dbReference type="NCBIfam" id="TIGR02370">
    <property type="entry name" value="pyl_corrinoid"/>
    <property type="match status" value="1"/>
</dbReference>
<dbReference type="PANTHER" id="PTHR45833">
    <property type="entry name" value="METHIONINE SYNTHASE"/>
    <property type="match status" value="1"/>
</dbReference>
<dbReference type="PANTHER" id="PTHR45833:SF1">
    <property type="entry name" value="METHIONINE SYNTHASE"/>
    <property type="match status" value="1"/>
</dbReference>
<dbReference type="Pfam" id="PF02310">
    <property type="entry name" value="B12-binding"/>
    <property type="match status" value="1"/>
</dbReference>
<dbReference type="Pfam" id="PF02607">
    <property type="entry name" value="B12-binding_2"/>
    <property type="match status" value="1"/>
</dbReference>
<dbReference type="SMART" id="SM01018">
    <property type="entry name" value="B12-binding_2"/>
    <property type="match status" value="1"/>
</dbReference>
<dbReference type="SUPFAM" id="SSF52242">
    <property type="entry name" value="Cobalamin (vitamin B12)-binding domain"/>
    <property type="match status" value="1"/>
</dbReference>
<dbReference type="SUPFAM" id="SSF47644">
    <property type="entry name" value="Methionine synthase domain"/>
    <property type="match status" value="1"/>
</dbReference>
<dbReference type="PROSITE" id="PS51332">
    <property type="entry name" value="B12_BINDING"/>
    <property type="match status" value="1"/>
</dbReference>
<dbReference type="PROSITE" id="PS51337">
    <property type="entry name" value="B12_BINDING_NTER"/>
    <property type="match status" value="1"/>
</dbReference>
<accession>P58979</accession>
<proteinExistence type="inferred from homology"/>